<protein>
    <recommendedName>
        <fullName>B3 domain-containing protein REM11</fullName>
    </recommendedName>
    <alternativeName>
        <fullName>Protein REPRODUCTIVE MERISTEM 11</fullName>
    </alternativeName>
</protein>
<feature type="chain" id="PRO_0000375105" description="B3 domain-containing protein REM11">
    <location>
        <begin position="1"/>
        <end position="286"/>
    </location>
</feature>
<feature type="DNA-binding region" description="TF-B3 1" evidence="1">
    <location>
        <begin position="1"/>
        <end position="70"/>
    </location>
</feature>
<feature type="DNA-binding region" description="TF-B3 2" evidence="1">
    <location>
        <begin position="119"/>
        <end position="219"/>
    </location>
</feature>
<feature type="region of interest" description="Disordered" evidence="2">
    <location>
        <begin position="68"/>
        <end position="114"/>
    </location>
</feature>
<feature type="compositionally biased region" description="Basic and acidic residues" evidence="2">
    <location>
        <begin position="78"/>
        <end position="89"/>
    </location>
</feature>
<reference key="1">
    <citation type="journal article" date="1999" name="Nature">
        <title>Sequence and analysis of chromosome 2 of the plant Arabidopsis thaliana.</title>
        <authorList>
            <person name="Lin X."/>
            <person name="Kaul S."/>
            <person name="Rounsley S.D."/>
            <person name="Shea T.P."/>
            <person name="Benito M.-I."/>
            <person name="Town C.D."/>
            <person name="Fujii C.Y."/>
            <person name="Mason T.M."/>
            <person name="Bowman C.L."/>
            <person name="Barnstead M.E."/>
            <person name="Feldblyum T.V."/>
            <person name="Buell C.R."/>
            <person name="Ketchum K.A."/>
            <person name="Lee J.J."/>
            <person name="Ronning C.M."/>
            <person name="Koo H.L."/>
            <person name="Moffat K.S."/>
            <person name="Cronin L.A."/>
            <person name="Shen M."/>
            <person name="Pai G."/>
            <person name="Van Aken S."/>
            <person name="Umayam L."/>
            <person name="Tallon L.J."/>
            <person name="Gill J.E."/>
            <person name="Adams M.D."/>
            <person name="Carrera A.J."/>
            <person name="Creasy T.H."/>
            <person name="Goodman H.M."/>
            <person name="Somerville C.R."/>
            <person name="Copenhaver G.P."/>
            <person name="Preuss D."/>
            <person name="Nierman W.C."/>
            <person name="White O."/>
            <person name="Eisen J.A."/>
            <person name="Salzberg S.L."/>
            <person name="Fraser C.M."/>
            <person name="Venter J.C."/>
        </authorList>
    </citation>
    <scope>NUCLEOTIDE SEQUENCE [LARGE SCALE GENOMIC DNA]</scope>
    <source>
        <strain>cv. Columbia</strain>
    </source>
</reference>
<reference key="2">
    <citation type="journal article" date="2017" name="Plant J.">
        <title>Araport11: a complete reannotation of the Arabidopsis thaliana reference genome.</title>
        <authorList>
            <person name="Cheng C.Y."/>
            <person name="Krishnakumar V."/>
            <person name="Chan A.P."/>
            <person name="Thibaud-Nissen F."/>
            <person name="Schobel S."/>
            <person name="Town C.D."/>
        </authorList>
    </citation>
    <scope>GENOME REANNOTATION</scope>
    <source>
        <strain>cv. Columbia</strain>
    </source>
</reference>
<reference key="3">
    <citation type="journal article" date="2008" name="Trends Plant Sci.">
        <title>The plant B3 superfamily.</title>
        <authorList>
            <person name="Swaminathan K."/>
            <person name="Peterson K."/>
            <person name="Jack T."/>
        </authorList>
    </citation>
    <scope>GENE FAMILY</scope>
</reference>
<gene>
    <name type="primary">REM11</name>
    <name type="ordered locus">At2g24681</name>
    <name type="ORF">F25P17.2</name>
</gene>
<keyword id="KW-0238">DNA-binding</keyword>
<keyword id="KW-0539">Nucleus</keyword>
<keyword id="KW-1185">Reference proteome</keyword>
<keyword id="KW-0677">Repeat</keyword>
<keyword id="KW-0804">Transcription</keyword>
<keyword id="KW-0805">Transcription regulation</keyword>
<name>REM11_ARATH</name>
<dbReference type="EMBL" id="AC006954">
    <property type="protein sequence ID" value="AAD23881.1"/>
    <property type="status" value="ALT_SEQ"/>
    <property type="molecule type" value="Genomic_DNA"/>
</dbReference>
<dbReference type="EMBL" id="CP002685">
    <property type="protein sequence ID" value="AEC07614.1"/>
    <property type="molecule type" value="Genomic_DNA"/>
</dbReference>
<dbReference type="PIR" id="F84639">
    <property type="entry name" value="F84639"/>
</dbReference>
<dbReference type="RefSeq" id="NP_001189596.1">
    <property type="nucleotide sequence ID" value="NM_001202667.1"/>
</dbReference>
<dbReference type="FunCoup" id="P0CAP3">
    <property type="interactions" value="2"/>
</dbReference>
<dbReference type="STRING" id="3702.P0CAP3"/>
<dbReference type="PaxDb" id="3702-AT2G24681.1"/>
<dbReference type="EnsemblPlants" id="AT2G24681.1">
    <property type="protein sequence ID" value="AT2G24681.1"/>
    <property type="gene ID" value="AT2G24681"/>
</dbReference>
<dbReference type="GeneID" id="10723044"/>
<dbReference type="Gramene" id="AT2G24681.1">
    <property type="protein sequence ID" value="AT2G24681.1"/>
    <property type="gene ID" value="AT2G24681"/>
</dbReference>
<dbReference type="KEGG" id="ath:AT2G24681"/>
<dbReference type="Araport" id="AT2G24681"/>
<dbReference type="TAIR" id="AT2G24681"/>
<dbReference type="HOGENOM" id="CLU_974345_0_0_1"/>
<dbReference type="InParanoid" id="P0CAP3"/>
<dbReference type="PRO" id="PR:P0CAP3"/>
<dbReference type="Proteomes" id="UP000006548">
    <property type="component" value="Chromosome 2"/>
</dbReference>
<dbReference type="ExpressionAtlas" id="P0CAP3">
    <property type="expression patterns" value="baseline and differential"/>
</dbReference>
<dbReference type="GO" id="GO:0005634">
    <property type="term" value="C:nucleus"/>
    <property type="evidence" value="ECO:0007669"/>
    <property type="project" value="UniProtKB-SubCell"/>
</dbReference>
<dbReference type="GO" id="GO:0003677">
    <property type="term" value="F:DNA binding"/>
    <property type="evidence" value="ECO:0007669"/>
    <property type="project" value="UniProtKB-KW"/>
</dbReference>
<dbReference type="CDD" id="cd10017">
    <property type="entry name" value="B3_DNA"/>
    <property type="match status" value="2"/>
</dbReference>
<dbReference type="Gene3D" id="2.40.330.10">
    <property type="entry name" value="DNA-binding pseudobarrel domain"/>
    <property type="match status" value="1"/>
</dbReference>
<dbReference type="InterPro" id="IPR003340">
    <property type="entry name" value="B3_DNA-bd"/>
</dbReference>
<dbReference type="InterPro" id="IPR015300">
    <property type="entry name" value="DNA-bd_pseudobarrel_sf"/>
</dbReference>
<dbReference type="InterPro" id="IPR039218">
    <property type="entry name" value="REM_fam"/>
</dbReference>
<dbReference type="PANTHER" id="PTHR31674:SF41">
    <property type="entry name" value="B3 DOMAIN-CONTAINING PROTEIN REM-LIKE 1-RELATED"/>
    <property type="match status" value="1"/>
</dbReference>
<dbReference type="PANTHER" id="PTHR31674">
    <property type="entry name" value="B3 DOMAIN-CONTAINING PROTEIN REM-LIKE 3-RELATED"/>
    <property type="match status" value="1"/>
</dbReference>
<dbReference type="Pfam" id="PF02362">
    <property type="entry name" value="B3"/>
    <property type="match status" value="1"/>
</dbReference>
<dbReference type="SMART" id="SM01019">
    <property type="entry name" value="B3"/>
    <property type="match status" value="2"/>
</dbReference>
<dbReference type="SUPFAM" id="SSF101936">
    <property type="entry name" value="DNA-binding pseudobarrel domain"/>
    <property type="match status" value="2"/>
</dbReference>
<dbReference type="PROSITE" id="PS50863">
    <property type="entry name" value="B3"/>
    <property type="match status" value="2"/>
</dbReference>
<accession>P0CAP3</accession>
<accession>Q9SJ97</accession>
<evidence type="ECO:0000255" key="1">
    <source>
        <dbReference type="PROSITE-ProRule" id="PRU00326"/>
    </source>
</evidence>
<evidence type="ECO:0000256" key="2">
    <source>
        <dbReference type="SAM" id="MobiDB-lite"/>
    </source>
</evidence>
<evidence type="ECO:0000305" key="3"/>
<sequence length="286" mass="32039">MAWNLAIITLVGKDGTKLEATLRRENRGLMCLGNGWKDLSISNGLKSGKSFTLELILENGTPMLSLVSTQSTSHKSQKRECSKHSEKESISAVPSKGKKNRKARSNREERRDSSSAIQNRFVTFTPEDIRDCILILPSQFIKANGINNLGEITLLGQNRMKWFAYLLSMSKDGSLALGSGWKGICEANGVNTGEAFTLEYIDEQETAHGRAQVCFYGVFPGKSVRSFASLRSKWNDLFYDFLREQNLRVNPIIGVAICLCKHHYCNYNSCSLFKPRPKLSQKNLNS</sequence>
<comment type="subcellular location">
    <subcellularLocation>
        <location evidence="1">Nucleus</location>
    </subcellularLocation>
</comment>
<comment type="sequence caution" evidence="3">
    <conflict type="erroneous gene model prediction">
        <sequence resource="EMBL-CDS" id="AAD23881"/>
    </conflict>
    <text>The predicted gene At2g24680 has been split into 2 genes: At2g24680 and At2g24681.</text>
</comment>
<proteinExistence type="inferred from homology"/>
<organism>
    <name type="scientific">Arabidopsis thaliana</name>
    <name type="common">Mouse-ear cress</name>
    <dbReference type="NCBI Taxonomy" id="3702"/>
    <lineage>
        <taxon>Eukaryota</taxon>
        <taxon>Viridiplantae</taxon>
        <taxon>Streptophyta</taxon>
        <taxon>Embryophyta</taxon>
        <taxon>Tracheophyta</taxon>
        <taxon>Spermatophyta</taxon>
        <taxon>Magnoliopsida</taxon>
        <taxon>eudicotyledons</taxon>
        <taxon>Gunneridae</taxon>
        <taxon>Pentapetalae</taxon>
        <taxon>rosids</taxon>
        <taxon>malvids</taxon>
        <taxon>Brassicales</taxon>
        <taxon>Brassicaceae</taxon>
        <taxon>Camelineae</taxon>
        <taxon>Arabidopsis</taxon>
    </lineage>
</organism>